<accession>B0TQH2</accession>
<feature type="chain" id="PRO_1000080196" description="Putative membrane protein insertion efficiency factor">
    <location>
        <begin position="1"/>
        <end position="84"/>
    </location>
</feature>
<comment type="function">
    <text evidence="1">Could be involved in insertion of integral membrane proteins into the membrane.</text>
</comment>
<comment type="subcellular location">
    <subcellularLocation>
        <location evidence="1">Cell inner membrane</location>
        <topology evidence="1">Peripheral membrane protein</topology>
        <orientation evidence="1">Cytoplasmic side</orientation>
    </subcellularLocation>
</comment>
<comment type="similarity">
    <text evidence="1">Belongs to the UPF0161 family.</text>
</comment>
<reference key="1">
    <citation type="submission" date="2008-01" db="EMBL/GenBank/DDBJ databases">
        <title>Complete sequence of Shewanella halifaxensis HAW-EB4.</title>
        <authorList>
            <consortium name="US DOE Joint Genome Institute"/>
            <person name="Copeland A."/>
            <person name="Lucas S."/>
            <person name="Lapidus A."/>
            <person name="Glavina del Rio T."/>
            <person name="Dalin E."/>
            <person name="Tice H."/>
            <person name="Bruce D."/>
            <person name="Goodwin L."/>
            <person name="Pitluck S."/>
            <person name="Sims D."/>
            <person name="Brettin T."/>
            <person name="Detter J.C."/>
            <person name="Han C."/>
            <person name="Kuske C.R."/>
            <person name="Schmutz J."/>
            <person name="Larimer F."/>
            <person name="Land M."/>
            <person name="Hauser L."/>
            <person name="Kyrpides N."/>
            <person name="Kim E."/>
            <person name="Zhao J.-S."/>
            <person name="Richardson P."/>
        </authorList>
    </citation>
    <scope>NUCLEOTIDE SEQUENCE [LARGE SCALE GENOMIC DNA]</scope>
    <source>
        <strain>HAW-EB4</strain>
    </source>
</reference>
<organism>
    <name type="scientific">Shewanella halifaxensis (strain HAW-EB4)</name>
    <dbReference type="NCBI Taxonomy" id="458817"/>
    <lineage>
        <taxon>Bacteria</taxon>
        <taxon>Pseudomonadati</taxon>
        <taxon>Pseudomonadota</taxon>
        <taxon>Gammaproteobacteria</taxon>
        <taxon>Alteromonadales</taxon>
        <taxon>Shewanellaceae</taxon>
        <taxon>Shewanella</taxon>
    </lineage>
</organism>
<keyword id="KW-0997">Cell inner membrane</keyword>
<keyword id="KW-1003">Cell membrane</keyword>
<keyword id="KW-0472">Membrane</keyword>
<dbReference type="EMBL" id="CP000931">
    <property type="protein sequence ID" value="ABZ78852.1"/>
    <property type="molecule type" value="Genomic_DNA"/>
</dbReference>
<dbReference type="RefSeq" id="WP_012279355.1">
    <property type="nucleotide sequence ID" value="NC_010334.1"/>
</dbReference>
<dbReference type="STRING" id="458817.Shal_4312"/>
<dbReference type="KEGG" id="shl:Shal_4312"/>
<dbReference type="eggNOG" id="COG0759">
    <property type="taxonomic scope" value="Bacteria"/>
</dbReference>
<dbReference type="HOGENOM" id="CLU_144811_5_2_6"/>
<dbReference type="OrthoDB" id="9801753at2"/>
<dbReference type="Proteomes" id="UP000001317">
    <property type="component" value="Chromosome"/>
</dbReference>
<dbReference type="GO" id="GO:0005886">
    <property type="term" value="C:plasma membrane"/>
    <property type="evidence" value="ECO:0007669"/>
    <property type="project" value="UniProtKB-SubCell"/>
</dbReference>
<dbReference type="HAMAP" id="MF_00386">
    <property type="entry name" value="UPF0161_YidD"/>
    <property type="match status" value="1"/>
</dbReference>
<dbReference type="InterPro" id="IPR002696">
    <property type="entry name" value="Membr_insert_effic_factor_YidD"/>
</dbReference>
<dbReference type="NCBIfam" id="TIGR00278">
    <property type="entry name" value="membrane protein insertion efficiency factor YidD"/>
    <property type="match status" value="1"/>
</dbReference>
<dbReference type="PANTHER" id="PTHR33383">
    <property type="entry name" value="MEMBRANE PROTEIN INSERTION EFFICIENCY FACTOR-RELATED"/>
    <property type="match status" value="1"/>
</dbReference>
<dbReference type="PANTHER" id="PTHR33383:SF1">
    <property type="entry name" value="MEMBRANE PROTEIN INSERTION EFFICIENCY FACTOR-RELATED"/>
    <property type="match status" value="1"/>
</dbReference>
<dbReference type="Pfam" id="PF01809">
    <property type="entry name" value="YidD"/>
    <property type="match status" value="1"/>
</dbReference>
<dbReference type="SMART" id="SM01234">
    <property type="entry name" value="Haemolytic"/>
    <property type="match status" value="1"/>
</dbReference>
<name>YIDD_SHEHH</name>
<proteinExistence type="inferred from homology"/>
<sequence length="84" mass="9579">MAKTQSPLQWLATTIIRGYQLLISPMLGPRCRFNPTCSHYAIEAIRLHGFVKGCWFAAKRILRCHPLHPGGEDPVPNKKHRCDK</sequence>
<gene>
    <name type="ordered locus">Shal_4312</name>
</gene>
<evidence type="ECO:0000255" key="1">
    <source>
        <dbReference type="HAMAP-Rule" id="MF_00386"/>
    </source>
</evidence>
<protein>
    <recommendedName>
        <fullName evidence="1">Putative membrane protein insertion efficiency factor</fullName>
    </recommendedName>
</protein>